<organism>
    <name type="scientific">Burkholderia pseudomallei (strain 1710b)</name>
    <dbReference type="NCBI Taxonomy" id="320372"/>
    <lineage>
        <taxon>Bacteria</taxon>
        <taxon>Pseudomonadati</taxon>
        <taxon>Pseudomonadota</taxon>
        <taxon>Betaproteobacteria</taxon>
        <taxon>Burkholderiales</taxon>
        <taxon>Burkholderiaceae</taxon>
        <taxon>Burkholderia</taxon>
        <taxon>pseudomallei group</taxon>
    </lineage>
</organism>
<gene>
    <name evidence="2" type="primary">infB</name>
    <name type="ordered locus">BURPS1710b_1915</name>
</gene>
<comment type="function">
    <text evidence="2">One of the essential components for the initiation of protein synthesis. Protects formylmethionyl-tRNA from spontaneous hydrolysis and promotes its binding to the 30S ribosomal subunits. Also involved in the hydrolysis of GTP during the formation of the 70S ribosomal complex.</text>
</comment>
<comment type="subcellular location">
    <subcellularLocation>
        <location evidence="2">Cytoplasm</location>
    </subcellularLocation>
</comment>
<comment type="similarity">
    <text evidence="2">Belongs to the TRAFAC class translation factor GTPase superfamily. Classic translation factor GTPase family. IF-2 subfamily.</text>
</comment>
<reference key="1">
    <citation type="journal article" date="2010" name="Genome Biol. Evol.">
        <title>Continuing evolution of Burkholderia mallei through genome reduction and large-scale rearrangements.</title>
        <authorList>
            <person name="Losada L."/>
            <person name="Ronning C.M."/>
            <person name="DeShazer D."/>
            <person name="Woods D."/>
            <person name="Fedorova N."/>
            <person name="Kim H.S."/>
            <person name="Shabalina S.A."/>
            <person name="Pearson T.R."/>
            <person name="Brinkac L."/>
            <person name="Tan P."/>
            <person name="Nandi T."/>
            <person name="Crabtree J."/>
            <person name="Badger J."/>
            <person name="Beckstrom-Sternberg S."/>
            <person name="Saqib M."/>
            <person name="Schutzer S.E."/>
            <person name="Keim P."/>
            <person name="Nierman W.C."/>
        </authorList>
    </citation>
    <scope>NUCLEOTIDE SEQUENCE [LARGE SCALE GENOMIC DNA]</scope>
    <source>
        <strain>1710b</strain>
    </source>
</reference>
<accession>Q3JSY9</accession>
<name>IF2_BURP1</name>
<protein>
    <recommendedName>
        <fullName evidence="2">Translation initiation factor IF-2</fullName>
    </recommendedName>
</protein>
<dbReference type="EMBL" id="CP000124">
    <property type="protein sequence ID" value="ABA48206.1"/>
    <property type="molecule type" value="Genomic_DNA"/>
</dbReference>
<dbReference type="RefSeq" id="WP_004526850.1">
    <property type="nucleotide sequence ID" value="NC_007434.1"/>
</dbReference>
<dbReference type="SMR" id="Q3JSY9"/>
<dbReference type="EnsemblBacteria" id="ABA48206">
    <property type="protein sequence ID" value="ABA48206"/>
    <property type="gene ID" value="BURPS1710b_1915"/>
</dbReference>
<dbReference type="KEGG" id="bpm:BURPS1710b_1915"/>
<dbReference type="HOGENOM" id="CLU_006301_6_0_4"/>
<dbReference type="Proteomes" id="UP000002700">
    <property type="component" value="Chromosome I"/>
</dbReference>
<dbReference type="GO" id="GO:0005829">
    <property type="term" value="C:cytosol"/>
    <property type="evidence" value="ECO:0007669"/>
    <property type="project" value="TreeGrafter"/>
</dbReference>
<dbReference type="GO" id="GO:0005525">
    <property type="term" value="F:GTP binding"/>
    <property type="evidence" value="ECO:0007669"/>
    <property type="project" value="UniProtKB-KW"/>
</dbReference>
<dbReference type="GO" id="GO:0003924">
    <property type="term" value="F:GTPase activity"/>
    <property type="evidence" value="ECO:0007669"/>
    <property type="project" value="UniProtKB-UniRule"/>
</dbReference>
<dbReference type="GO" id="GO:0097216">
    <property type="term" value="F:guanosine tetraphosphate binding"/>
    <property type="evidence" value="ECO:0007669"/>
    <property type="project" value="UniProtKB-ARBA"/>
</dbReference>
<dbReference type="GO" id="GO:0003743">
    <property type="term" value="F:translation initiation factor activity"/>
    <property type="evidence" value="ECO:0007669"/>
    <property type="project" value="UniProtKB-UniRule"/>
</dbReference>
<dbReference type="CDD" id="cd01887">
    <property type="entry name" value="IF2_eIF5B"/>
    <property type="match status" value="1"/>
</dbReference>
<dbReference type="CDD" id="cd03702">
    <property type="entry name" value="IF2_mtIF2_II"/>
    <property type="match status" value="1"/>
</dbReference>
<dbReference type="CDD" id="cd03692">
    <property type="entry name" value="mtIF2_IVc"/>
    <property type="match status" value="1"/>
</dbReference>
<dbReference type="FunFam" id="2.40.30.10:FF:000007">
    <property type="entry name" value="Translation initiation factor IF-2"/>
    <property type="match status" value="1"/>
</dbReference>
<dbReference type="FunFam" id="2.40.30.10:FF:000008">
    <property type="entry name" value="Translation initiation factor IF-2"/>
    <property type="match status" value="1"/>
</dbReference>
<dbReference type="FunFam" id="3.40.50.10050:FF:000001">
    <property type="entry name" value="Translation initiation factor IF-2"/>
    <property type="match status" value="1"/>
</dbReference>
<dbReference type="FunFam" id="3.40.50.300:FF:000019">
    <property type="entry name" value="Translation initiation factor IF-2"/>
    <property type="match status" value="1"/>
</dbReference>
<dbReference type="Gene3D" id="3.40.50.300">
    <property type="entry name" value="P-loop containing nucleotide triphosphate hydrolases"/>
    <property type="match status" value="1"/>
</dbReference>
<dbReference type="Gene3D" id="3.30.56.50">
    <property type="entry name" value="Putative DNA-binding domain, N-terminal subdomain of bacterial translation initiation factor IF2"/>
    <property type="match status" value="1"/>
</dbReference>
<dbReference type="Gene3D" id="2.40.30.10">
    <property type="entry name" value="Translation factors"/>
    <property type="match status" value="2"/>
</dbReference>
<dbReference type="Gene3D" id="3.40.50.10050">
    <property type="entry name" value="Translation initiation factor IF- 2, domain 3"/>
    <property type="match status" value="1"/>
</dbReference>
<dbReference type="HAMAP" id="MF_00100_B">
    <property type="entry name" value="IF_2_B"/>
    <property type="match status" value="1"/>
</dbReference>
<dbReference type="InterPro" id="IPR009061">
    <property type="entry name" value="DNA-bd_dom_put_sf"/>
</dbReference>
<dbReference type="InterPro" id="IPR053905">
    <property type="entry name" value="EF-G-like_DII"/>
</dbReference>
<dbReference type="InterPro" id="IPR004161">
    <property type="entry name" value="EFTu-like_2"/>
</dbReference>
<dbReference type="InterPro" id="IPR013575">
    <property type="entry name" value="IF2_assoc_dom_bac"/>
</dbReference>
<dbReference type="InterPro" id="IPR044145">
    <property type="entry name" value="IF2_II"/>
</dbReference>
<dbReference type="InterPro" id="IPR006847">
    <property type="entry name" value="IF2_N"/>
</dbReference>
<dbReference type="InterPro" id="IPR027417">
    <property type="entry name" value="P-loop_NTPase"/>
</dbReference>
<dbReference type="InterPro" id="IPR005225">
    <property type="entry name" value="Small_GTP-bd"/>
</dbReference>
<dbReference type="InterPro" id="IPR000795">
    <property type="entry name" value="T_Tr_GTP-bd_dom"/>
</dbReference>
<dbReference type="InterPro" id="IPR000178">
    <property type="entry name" value="TF_IF2_bacterial-like"/>
</dbReference>
<dbReference type="InterPro" id="IPR015760">
    <property type="entry name" value="TIF_IF2"/>
</dbReference>
<dbReference type="InterPro" id="IPR023115">
    <property type="entry name" value="TIF_IF2_dom3"/>
</dbReference>
<dbReference type="InterPro" id="IPR036925">
    <property type="entry name" value="TIF_IF2_dom3_sf"/>
</dbReference>
<dbReference type="InterPro" id="IPR009000">
    <property type="entry name" value="Transl_B-barrel_sf"/>
</dbReference>
<dbReference type="NCBIfam" id="TIGR00487">
    <property type="entry name" value="IF-2"/>
    <property type="match status" value="1"/>
</dbReference>
<dbReference type="NCBIfam" id="TIGR00231">
    <property type="entry name" value="small_GTP"/>
    <property type="match status" value="1"/>
</dbReference>
<dbReference type="PANTHER" id="PTHR43381:SF5">
    <property type="entry name" value="TR-TYPE G DOMAIN-CONTAINING PROTEIN"/>
    <property type="match status" value="1"/>
</dbReference>
<dbReference type="PANTHER" id="PTHR43381">
    <property type="entry name" value="TRANSLATION INITIATION FACTOR IF-2-RELATED"/>
    <property type="match status" value="1"/>
</dbReference>
<dbReference type="Pfam" id="PF22042">
    <property type="entry name" value="EF-G_D2"/>
    <property type="match status" value="1"/>
</dbReference>
<dbReference type="Pfam" id="PF00009">
    <property type="entry name" value="GTP_EFTU"/>
    <property type="match status" value="1"/>
</dbReference>
<dbReference type="Pfam" id="PF03144">
    <property type="entry name" value="GTP_EFTU_D2"/>
    <property type="match status" value="1"/>
</dbReference>
<dbReference type="Pfam" id="PF11987">
    <property type="entry name" value="IF-2"/>
    <property type="match status" value="1"/>
</dbReference>
<dbReference type="Pfam" id="PF08364">
    <property type="entry name" value="IF2_assoc"/>
    <property type="match status" value="1"/>
</dbReference>
<dbReference type="Pfam" id="PF04760">
    <property type="entry name" value="IF2_N"/>
    <property type="match status" value="2"/>
</dbReference>
<dbReference type="SUPFAM" id="SSF52156">
    <property type="entry name" value="Initiation factor IF2/eIF5b, domain 3"/>
    <property type="match status" value="1"/>
</dbReference>
<dbReference type="SUPFAM" id="SSF52540">
    <property type="entry name" value="P-loop containing nucleoside triphosphate hydrolases"/>
    <property type="match status" value="1"/>
</dbReference>
<dbReference type="SUPFAM" id="SSF46955">
    <property type="entry name" value="Putative DNA-binding domain"/>
    <property type="match status" value="1"/>
</dbReference>
<dbReference type="SUPFAM" id="SSF50447">
    <property type="entry name" value="Translation proteins"/>
    <property type="match status" value="2"/>
</dbReference>
<dbReference type="PROSITE" id="PS51722">
    <property type="entry name" value="G_TR_2"/>
    <property type="match status" value="1"/>
</dbReference>
<dbReference type="PROSITE" id="PS01176">
    <property type="entry name" value="IF2"/>
    <property type="match status" value="1"/>
</dbReference>
<proteinExistence type="inferred from homology"/>
<evidence type="ECO:0000250" key="1"/>
<evidence type="ECO:0000255" key="2">
    <source>
        <dbReference type="HAMAP-Rule" id="MF_00100"/>
    </source>
</evidence>
<evidence type="ECO:0000256" key="3">
    <source>
        <dbReference type="SAM" id="MobiDB-lite"/>
    </source>
</evidence>
<keyword id="KW-0963">Cytoplasm</keyword>
<keyword id="KW-0342">GTP-binding</keyword>
<keyword id="KW-0396">Initiation factor</keyword>
<keyword id="KW-0547">Nucleotide-binding</keyword>
<keyword id="KW-0648">Protein biosynthesis</keyword>
<feature type="chain" id="PRO_0000228179" description="Translation initiation factor IF-2">
    <location>
        <begin position="1"/>
        <end position="975"/>
    </location>
</feature>
<feature type="domain" description="tr-type G">
    <location>
        <begin position="475"/>
        <end position="644"/>
    </location>
</feature>
<feature type="region of interest" description="Disordered" evidence="3">
    <location>
        <begin position="48"/>
        <end position="84"/>
    </location>
</feature>
<feature type="region of interest" description="Disordered" evidence="3">
    <location>
        <begin position="96"/>
        <end position="388"/>
    </location>
</feature>
<feature type="region of interest" description="G1" evidence="1">
    <location>
        <begin position="484"/>
        <end position="491"/>
    </location>
</feature>
<feature type="region of interest" description="G2" evidence="1">
    <location>
        <begin position="509"/>
        <end position="513"/>
    </location>
</feature>
<feature type="region of interest" description="G3" evidence="1">
    <location>
        <begin position="530"/>
        <end position="533"/>
    </location>
</feature>
<feature type="region of interest" description="G4" evidence="1">
    <location>
        <begin position="584"/>
        <end position="587"/>
    </location>
</feature>
<feature type="region of interest" description="G5" evidence="1">
    <location>
        <begin position="620"/>
        <end position="622"/>
    </location>
</feature>
<feature type="compositionally biased region" description="Basic and acidic residues" evidence="3">
    <location>
        <begin position="48"/>
        <end position="63"/>
    </location>
</feature>
<feature type="compositionally biased region" description="Low complexity" evidence="3">
    <location>
        <begin position="104"/>
        <end position="115"/>
    </location>
</feature>
<feature type="compositionally biased region" description="Basic and acidic residues" evidence="3">
    <location>
        <begin position="120"/>
        <end position="177"/>
    </location>
</feature>
<feature type="compositionally biased region" description="Low complexity" evidence="3">
    <location>
        <begin position="178"/>
        <end position="211"/>
    </location>
</feature>
<feature type="compositionally biased region" description="Basic and acidic residues" evidence="3">
    <location>
        <begin position="212"/>
        <end position="263"/>
    </location>
</feature>
<feature type="compositionally biased region" description="Low complexity" evidence="3">
    <location>
        <begin position="302"/>
        <end position="330"/>
    </location>
</feature>
<feature type="compositionally biased region" description="Gly residues" evidence="3">
    <location>
        <begin position="359"/>
        <end position="372"/>
    </location>
</feature>
<feature type="binding site" evidence="2">
    <location>
        <begin position="484"/>
        <end position="491"/>
    </location>
    <ligand>
        <name>GTP</name>
        <dbReference type="ChEBI" id="CHEBI:37565"/>
    </ligand>
</feature>
<feature type="binding site" evidence="2">
    <location>
        <begin position="530"/>
        <end position="534"/>
    </location>
    <ligand>
        <name>GTP</name>
        <dbReference type="ChEBI" id="CHEBI:37565"/>
    </ligand>
</feature>
<feature type="binding site" evidence="2">
    <location>
        <begin position="584"/>
        <end position="587"/>
    </location>
    <ligand>
        <name>GTP</name>
        <dbReference type="ChEBI" id="CHEBI:37565"/>
    </ligand>
</feature>
<sequence length="975" mass="104765">MASNNVAQFAAELKMPAGVLLEQLQAAGVQKASEDDALSETDKARLLDHLRKSHGATDGDKRKITLTRRHTSEIKQADATGKARTIQVEVRKKRTFVKRDDVSETGADQAQAQTDEQAEAELKRREEEARREAELLEKQAQELRERQERLEREEAERRAREEAAEAERRRAEEEAAAKRAAAAQAEAAQQAAAAREQAQRAQSEPAEQSAQDEARAAAERAAQREAAKKAEDAAREAADKARAEQEEIRKRREAAEAEARAIREMMNTPRRAQVKAVEPPKPAEPPAAKAAEAKGTLHKPAKPAGEAAAARPAAKKPASGAPAPAAAPAGDRTKKPGTGKSGWQDDAAKRRGIKTRGDSSGGVDRGWRGGPKGRGKHQDSASSFQAPTEPIVREVHVPETISVADLAHKMSIKASEVIKVMMKMGQMVTINQVLDQETAMIVVEELGHRALAAKLDDPEALLVEGEIGSDAEQLPRPPVVTVMGHVDHGKTSLLDYIRRAKVAAGEAGGITQHIGAYHVETPRGVVTFLDTPGHEAFTAMRARGAKATDIVILVVAADDGVMPQTKEAISHAKAGGVPIVVAINKIDKPEANPDRVKQELVAEGVVPEEYGGDSPFVPVSAKTGAGIDDLLENVLLQAEVLELKAPVESPAKGIVIEAKLDKGKGPVATVLVQSGTLSRGDVVLAGTAYGRVRAMLDENGKPTKEAGPSIPVEIQGLSEVPGAGEEVIVLPDERKAREIALFRQGKFRDVKLAKQQAAKLESMLEQMGEGEVQNLPLIIKADVQGSQEALVQSLLKLSTDEVRVQIVHSAVGGISESDVNLATASKAVIIGFNTRADAQARKLAEANGIDIRYYNIIYDAVDEVKAAMSGMLAPEKREVVTGMVEVRQVFKVPKVGTVAGCMVTDGVVKRSSSVRVLRNNVVIFTGELDSLKRFKDDVKEVKQGFECGMSLKNFNDIVEGDQFEVFEVTEVARTL</sequence>